<organism>
    <name type="scientific">Cymbidium ringspot virus</name>
    <name type="common">CymRSV</name>
    <dbReference type="NCBI Taxonomy" id="12144"/>
    <lineage>
        <taxon>Viruses</taxon>
        <taxon>Riboviria</taxon>
        <taxon>Orthornavirae</taxon>
        <taxon>Kitrinoviricota</taxon>
        <taxon>Tolucaviricetes</taxon>
        <taxon>Tolivirales</taxon>
        <taxon>Tombusviridae</taxon>
        <taxon>Procedovirinae</taxon>
        <taxon>Tombusvirus</taxon>
        <taxon>Tombusvirus cymbidii</taxon>
    </lineage>
</organism>
<gene>
    <name type="ORF">ORF4</name>
</gene>
<name>P19_CRV</name>
<evidence type="ECO:0000250" key="1"/>
<evidence type="ECO:0000256" key="2">
    <source>
        <dbReference type="SAM" id="MobiDB-lite"/>
    </source>
</evidence>
<evidence type="ECO:0000269" key="3">
    <source>
    </source>
</evidence>
<evidence type="ECO:0000305" key="4"/>
<dbReference type="EMBL" id="X15511">
    <property type="protein sequence ID" value="CAA33535.1"/>
    <property type="molecule type" value="Genomic_RNA"/>
</dbReference>
<dbReference type="PIR" id="JS0271">
    <property type="entry name" value="NKVGD2"/>
</dbReference>
<dbReference type="RefSeq" id="NP_613264.1">
    <property type="nucleotide sequence ID" value="NC_003532.1"/>
</dbReference>
<dbReference type="SMR" id="P17457"/>
<dbReference type="KEGG" id="vg:935903"/>
<dbReference type="OrthoDB" id="10877at10239"/>
<dbReference type="Proteomes" id="UP000008567">
    <property type="component" value="Genome"/>
</dbReference>
<dbReference type="GO" id="GO:0044423">
    <property type="term" value="C:virion component"/>
    <property type="evidence" value="ECO:0007669"/>
    <property type="project" value="InterPro"/>
</dbReference>
<dbReference type="GO" id="GO:0003723">
    <property type="term" value="F:RNA binding"/>
    <property type="evidence" value="ECO:0007669"/>
    <property type="project" value="UniProtKB-KW"/>
</dbReference>
<dbReference type="GO" id="GO:0052170">
    <property type="term" value="P:symbiont-mediated suppression of host innate immune response"/>
    <property type="evidence" value="ECO:0007669"/>
    <property type="project" value="UniProtKB-KW"/>
</dbReference>
<dbReference type="Gene3D" id="3.30.390.180">
    <property type="entry name" value="RNA silencing suppressor P19"/>
    <property type="match status" value="1"/>
</dbReference>
<dbReference type="InterPro" id="IPR004905">
    <property type="entry name" value="Tombusvirus_p19"/>
</dbReference>
<dbReference type="InterPro" id="IPR036131">
    <property type="entry name" value="VP19_sf"/>
</dbReference>
<dbReference type="Pfam" id="PF03220">
    <property type="entry name" value="Tombus_P19"/>
    <property type="match status" value="1"/>
</dbReference>
<dbReference type="SUPFAM" id="SSF103145">
    <property type="entry name" value="Tombusvirus P19 core protein, VP19"/>
    <property type="match status" value="1"/>
</dbReference>
<reference key="1">
    <citation type="journal article" date="1989" name="J. Gen. Virol.">
        <title>Nucleotide sequence of the 3'-terminal region of cymbidium ringspot virus RNA.</title>
        <authorList>
            <person name="Grieco F."/>
            <person name="Burgyan J."/>
            <person name="Russo M."/>
        </authorList>
    </citation>
    <scope>NUCLEOTIDE SEQUENCE [GENOMIC RNA]</scope>
</reference>
<reference key="2">
    <citation type="journal article" date="1989" name="Nucleic Acids Res.">
        <title>The nucleotide sequence of cymbidium ringspot virus RNA.</title>
        <authorList>
            <person name="Grieco F."/>
            <person name="Burgyan J."/>
            <person name="Russo M."/>
        </authorList>
    </citation>
    <scope>NUCLEOTIDE SEQUENCE [GENOMIC RNA]</scope>
</reference>
<reference key="3">
    <citation type="journal article" date="2002" name="EMBO J.">
        <title>A viral protein suppresses RNA silencing and binds silencing-generated, 21- to 25-nucleotide double-stranded RNAs.</title>
        <authorList>
            <person name="Silhavy D."/>
            <person name="Molnar A."/>
            <person name="Lucioli A."/>
            <person name="Szittya G."/>
            <person name="Hornyik C."/>
            <person name="Tavazza M."/>
            <person name="Burgyan J."/>
        </authorList>
    </citation>
    <scope>FUNCTION</scope>
</reference>
<proteinExistence type="inferred from homology"/>
<sequence>MERAIQGSDVREQADSECWDGGGGGTTSPFKLPDESPSLHEWRLHHSEESENKDNPLGFKESWSFGKVVFKRYLRYDGAETSLHRALGSWERDSVNDAASRFLGLSQIGCTYSIRFRGTRLTLSGGSGTLQRLIEMAIRTKRTMLQPTPSEREGNVSRRRPEGTEAFKEESE</sequence>
<keyword id="KW-0945">Host-virus interaction</keyword>
<keyword id="KW-1090">Inhibition of host innate immune response by virus</keyword>
<keyword id="KW-0694">RNA-binding</keyword>
<keyword id="KW-0941">Suppressor of RNA silencing</keyword>
<keyword id="KW-0899">Viral immunoevasion</keyword>
<organismHost>
    <name type="scientific">Cymbidium</name>
    <dbReference type="NCBI Taxonomy" id="14366"/>
</organismHost>
<organismHost>
    <name type="scientific">Trifolium repens</name>
    <name type="common">Creeping white clover</name>
    <dbReference type="NCBI Taxonomy" id="3899"/>
</organismHost>
<accession>P17457</accession>
<feature type="chain" id="PRO_0000222874" description="RNA silencing suppressor p19">
    <location>
        <begin position="1"/>
        <end position="172"/>
    </location>
</feature>
<feature type="region of interest" description="Disordered" evidence="2">
    <location>
        <begin position="1"/>
        <end position="34"/>
    </location>
</feature>
<feature type="region of interest" description="Disordered" evidence="2">
    <location>
        <begin position="145"/>
        <end position="172"/>
    </location>
</feature>
<feature type="compositionally biased region" description="Basic and acidic residues" evidence="2">
    <location>
        <begin position="1"/>
        <end position="14"/>
    </location>
</feature>
<feature type="compositionally biased region" description="Basic and acidic residues" evidence="2">
    <location>
        <begin position="150"/>
        <end position="172"/>
    </location>
</feature>
<protein>
    <recommendedName>
        <fullName>RNA silencing suppressor p19</fullName>
    </recommendedName>
    <alternativeName>
        <fullName>19 kDa symptom severity modulator</fullName>
    </alternativeName>
</protein>
<comment type="function">
    <text evidence="1 3">Viral suppressor of RNA silencing which binds specifically to silencing RNAs (siRNAs). Acts as a molecular caliper to specifically select siRNAs based on the length of the duplex region of the RNA (By similarity).</text>
</comment>
<comment type="subunit">
    <text evidence="1">Homodimer.</text>
</comment>
<comment type="similarity">
    <text evidence="4">Belongs to the tombusvirus protein p19 family.</text>
</comment>